<protein>
    <recommendedName>
        <fullName evidence="1">Large ribosomal subunit protein uL18</fullName>
    </recommendedName>
    <alternativeName>
        <fullName evidence="2">50S ribosomal protein L18</fullName>
    </alternativeName>
</protein>
<keyword id="KW-1185">Reference proteome</keyword>
<keyword id="KW-0687">Ribonucleoprotein</keyword>
<keyword id="KW-0689">Ribosomal protein</keyword>
<keyword id="KW-0694">RNA-binding</keyword>
<keyword id="KW-0699">rRNA-binding</keyword>
<name>RL18_SPHAL</name>
<sequence>MAHLTQFEKRRQRVRTALRQRAAGRPRLSVHRSGRHIYAQLIDDAAGTTLAAASTLDKDVRGKTGATTAAAADVGKRLAAAAKKAGVTQVVFDRGGFLFHGRIKALADAAREGGLEF</sequence>
<accession>Q1GPB5</accession>
<comment type="function">
    <text evidence="1">This is one of the proteins that bind and probably mediate the attachment of the 5S RNA into the large ribosomal subunit, where it forms part of the central protuberance.</text>
</comment>
<comment type="subunit">
    <text evidence="1">Part of the 50S ribosomal subunit; part of the 5S rRNA/L5/L18/L25 subcomplex. Contacts the 5S and 23S rRNAs.</text>
</comment>
<comment type="similarity">
    <text evidence="1">Belongs to the universal ribosomal protein uL18 family.</text>
</comment>
<proteinExistence type="inferred from homology"/>
<feature type="chain" id="PRO_0000251372" description="Large ribosomal subunit protein uL18">
    <location>
        <begin position="1"/>
        <end position="117"/>
    </location>
</feature>
<gene>
    <name evidence="1" type="primary">rplR</name>
    <name type="ordered locus">Sala_2802</name>
</gene>
<reference key="1">
    <citation type="journal article" date="2009" name="Proc. Natl. Acad. Sci. U.S.A.">
        <title>The genomic basis of trophic strategy in marine bacteria.</title>
        <authorList>
            <person name="Lauro F.M."/>
            <person name="McDougald D."/>
            <person name="Thomas T."/>
            <person name="Williams T.J."/>
            <person name="Egan S."/>
            <person name="Rice S."/>
            <person name="DeMaere M.Z."/>
            <person name="Ting L."/>
            <person name="Ertan H."/>
            <person name="Johnson J."/>
            <person name="Ferriera S."/>
            <person name="Lapidus A."/>
            <person name="Anderson I."/>
            <person name="Kyrpides N."/>
            <person name="Munk A.C."/>
            <person name="Detter C."/>
            <person name="Han C.S."/>
            <person name="Brown M.V."/>
            <person name="Robb F.T."/>
            <person name="Kjelleberg S."/>
            <person name="Cavicchioli R."/>
        </authorList>
    </citation>
    <scope>NUCLEOTIDE SEQUENCE [LARGE SCALE GENOMIC DNA]</scope>
    <source>
        <strain>DSM 13593 / LMG 18877 / RB2256</strain>
    </source>
</reference>
<evidence type="ECO:0000255" key="1">
    <source>
        <dbReference type="HAMAP-Rule" id="MF_01337"/>
    </source>
</evidence>
<evidence type="ECO:0000305" key="2"/>
<organism>
    <name type="scientific">Sphingopyxis alaskensis (strain DSM 13593 / LMG 18877 / RB2256)</name>
    <name type="common">Sphingomonas alaskensis</name>
    <dbReference type="NCBI Taxonomy" id="317655"/>
    <lineage>
        <taxon>Bacteria</taxon>
        <taxon>Pseudomonadati</taxon>
        <taxon>Pseudomonadota</taxon>
        <taxon>Alphaproteobacteria</taxon>
        <taxon>Sphingomonadales</taxon>
        <taxon>Sphingomonadaceae</taxon>
        <taxon>Sphingopyxis</taxon>
    </lineage>
</organism>
<dbReference type="EMBL" id="CP000356">
    <property type="protein sequence ID" value="ABF54507.1"/>
    <property type="molecule type" value="Genomic_DNA"/>
</dbReference>
<dbReference type="RefSeq" id="WP_011543072.1">
    <property type="nucleotide sequence ID" value="NC_008048.1"/>
</dbReference>
<dbReference type="SMR" id="Q1GPB5"/>
<dbReference type="STRING" id="317655.Sala_2802"/>
<dbReference type="KEGG" id="sal:Sala_2802"/>
<dbReference type="eggNOG" id="COG0256">
    <property type="taxonomic scope" value="Bacteria"/>
</dbReference>
<dbReference type="HOGENOM" id="CLU_098841_0_1_5"/>
<dbReference type="OrthoDB" id="9810939at2"/>
<dbReference type="Proteomes" id="UP000006578">
    <property type="component" value="Chromosome"/>
</dbReference>
<dbReference type="GO" id="GO:0022625">
    <property type="term" value="C:cytosolic large ribosomal subunit"/>
    <property type="evidence" value="ECO:0007669"/>
    <property type="project" value="TreeGrafter"/>
</dbReference>
<dbReference type="GO" id="GO:0008097">
    <property type="term" value="F:5S rRNA binding"/>
    <property type="evidence" value="ECO:0007669"/>
    <property type="project" value="TreeGrafter"/>
</dbReference>
<dbReference type="GO" id="GO:0003735">
    <property type="term" value="F:structural constituent of ribosome"/>
    <property type="evidence" value="ECO:0007669"/>
    <property type="project" value="InterPro"/>
</dbReference>
<dbReference type="GO" id="GO:0006412">
    <property type="term" value="P:translation"/>
    <property type="evidence" value="ECO:0007669"/>
    <property type="project" value="UniProtKB-UniRule"/>
</dbReference>
<dbReference type="CDD" id="cd00432">
    <property type="entry name" value="Ribosomal_L18_L5e"/>
    <property type="match status" value="1"/>
</dbReference>
<dbReference type="FunFam" id="3.30.420.100:FF:000001">
    <property type="entry name" value="50S ribosomal protein L18"/>
    <property type="match status" value="1"/>
</dbReference>
<dbReference type="Gene3D" id="3.30.420.100">
    <property type="match status" value="1"/>
</dbReference>
<dbReference type="HAMAP" id="MF_01337_B">
    <property type="entry name" value="Ribosomal_uL18_B"/>
    <property type="match status" value="1"/>
</dbReference>
<dbReference type="InterPro" id="IPR004389">
    <property type="entry name" value="Ribosomal_uL18_bac-type"/>
</dbReference>
<dbReference type="InterPro" id="IPR005484">
    <property type="entry name" value="Ribosomal_uL18_bac/euk"/>
</dbReference>
<dbReference type="NCBIfam" id="TIGR00060">
    <property type="entry name" value="L18_bact"/>
    <property type="match status" value="1"/>
</dbReference>
<dbReference type="PANTHER" id="PTHR12899">
    <property type="entry name" value="39S RIBOSOMAL PROTEIN L18, MITOCHONDRIAL"/>
    <property type="match status" value="1"/>
</dbReference>
<dbReference type="PANTHER" id="PTHR12899:SF3">
    <property type="entry name" value="LARGE RIBOSOMAL SUBUNIT PROTEIN UL18M"/>
    <property type="match status" value="1"/>
</dbReference>
<dbReference type="Pfam" id="PF00861">
    <property type="entry name" value="Ribosomal_L18p"/>
    <property type="match status" value="1"/>
</dbReference>
<dbReference type="SUPFAM" id="SSF53137">
    <property type="entry name" value="Translational machinery components"/>
    <property type="match status" value="1"/>
</dbReference>